<protein>
    <recommendedName>
        <fullName evidence="1">Transcriptional repressor NrdR</fullName>
    </recommendedName>
</protein>
<dbReference type="EMBL" id="CP000802">
    <property type="protein sequence ID" value="ABV04869.1"/>
    <property type="molecule type" value="Genomic_DNA"/>
</dbReference>
<dbReference type="RefSeq" id="WP_000543535.1">
    <property type="nucleotide sequence ID" value="NC_009800.1"/>
</dbReference>
<dbReference type="SMR" id="A7ZX65"/>
<dbReference type="GeneID" id="93777047"/>
<dbReference type="KEGG" id="ecx:EcHS_A0484"/>
<dbReference type="HOGENOM" id="CLU_108412_0_0_6"/>
<dbReference type="GO" id="GO:0005524">
    <property type="term" value="F:ATP binding"/>
    <property type="evidence" value="ECO:0007669"/>
    <property type="project" value="UniProtKB-KW"/>
</dbReference>
<dbReference type="GO" id="GO:0003677">
    <property type="term" value="F:DNA binding"/>
    <property type="evidence" value="ECO:0007669"/>
    <property type="project" value="UniProtKB-KW"/>
</dbReference>
<dbReference type="GO" id="GO:0008270">
    <property type="term" value="F:zinc ion binding"/>
    <property type="evidence" value="ECO:0007669"/>
    <property type="project" value="UniProtKB-UniRule"/>
</dbReference>
<dbReference type="GO" id="GO:0045892">
    <property type="term" value="P:negative regulation of DNA-templated transcription"/>
    <property type="evidence" value="ECO:0007669"/>
    <property type="project" value="UniProtKB-UniRule"/>
</dbReference>
<dbReference type="HAMAP" id="MF_00440">
    <property type="entry name" value="NrdR"/>
    <property type="match status" value="1"/>
</dbReference>
<dbReference type="InterPro" id="IPR005144">
    <property type="entry name" value="ATP-cone_dom"/>
</dbReference>
<dbReference type="InterPro" id="IPR055173">
    <property type="entry name" value="NrdR-like_N"/>
</dbReference>
<dbReference type="InterPro" id="IPR003796">
    <property type="entry name" value="RNR_NrdR-like"/>
</dbReference>
<dbReference type="NCBIfam" id="TIGR00244">
    <property type="entry name" value="transcriptional regulator NrdR"/>
    <property type="match status" value="1"/>
</dbReference>
<dbReference type="PANTHER" id="PTHR30455">
    <property type="entry name" value="TRANSCRIPTIONAL REPRESSOR NRDR"/>
    <property type="match status" value="1"/>
</dbReference>
<dbReference type="PANTHER" id="PTHR30455:SF2">
    <property type="entry name" value="TRANSCRIPTIONAL REPRESSOR NRDR"/>
    <property type="match status" value="1"/>
</dbReference>
<dbReference type="Pfam" id="PF03477">
    <property type="entry name" value="ATP-cone"/>
    <property type="match status" value="1"/>
</dbReference>
<dbReference type="Pfam" id="PF22811">
    <property type="entry name" value="Zn_ribbon_NrdR"/>
    <property type="match status" value="1"/>
</dbReference>
<dbReference type="PROSITE" id="PS51161">
    <property type="entry name" value="ATP_CONE"/>
    <property type="match status" value="1"/>
</dbReference>
<proteinExistence type="inferred from homology"/>
<evidence type="ECO:0000255" key="1">
    <source>
        <dbReference type="HAMAP-Rule" id="MF_00440"/>
    </source>
</evidence>
<comment type="function">
    <text evidence="1">Negatively regulates transcription of bacterial ribonucleotide reductase nrd genes and operons by binding to NrdR-boxes.</text>
</comment>
<comment type="cofactor">
    <cofactor evidence="1">
        <name>Zn(2+)</name>
        <dbReference type="ChEBI" id="CHEBI:29105"/>
    </cofactor>
    <text evidence="1">Binds 1 zinc ion.</text>
</comment>
<comment type="similarity">
    <text evidence="1">Belongs to the NrdR family.</text>
</comment>
<organism>
    <name type="scientific">Escherichia coli O9:H4 (strain HS)</name>
    <dbReference type="NCBI Taxonomy" id="331112"/>
    <lineage>
        <taxon>Bacteria</taxon>
        <taxon>Pseudomonadati</taxon>
        <taxon>Pseudomonadota</taxon>
        <taxon>Gammaproteobacteria</taxon>
        <taxon>Enterobacterales</taxon>
        <taxon>Enterobacteriaceae</taxon>
        <taxon>Escherichia</taxon>
    </lineage>
</organism>
<keyword id="KW-0067">ATP-binding</keyword>
<keyword id="KW-0238">DNA-binding</keyword>
<keyword id="KW-0479">Metal-binding</keyword>
<keyword id="KW-0547">Nucleotide-binding</keyword>
<keyword id="KW-0678">Repressor</keyword>
<keyword id="KW-0804">Transcription</keyword>
<keyword id="KW-0805">Transcription regulation</keyword>
<keyword id="KW-0862">Zinc</keyword>
<keyword id="KW-0863">Zinc-finger</keyword>
<reference key="1">
    <citation type="journal article" date="2008" name="J. Bacteriol.">
        <title>The pangenome structure of Escherichia coli: comparative genomic analysis of E. coli commensal and pathogenic isolates.</title>
        <authorList>
            <person name="Rasko D.A."/>
            <person name="Rosovitz M.J."/>
            <person name="Myers G.S.A."/>
            <person name="Mongodin E.F."/>
            <person name="Fricke W.F."/>
            <person name="Gajer P."/>
            <person name="Crabtree J."/>
            <person name="Sebaihia M."/>
            <person name="Thomson N.R."/>
            <person name="Chaudhuri R."/>
            <person name="Henderson I.R."/>
            <person name="Sperandio V."/>
            <person name="Ravel J."/>
        </authorList>
    </citation>
    <scope>NUCLEOTIDE SEQUENCE [LARGE SCALE GENOMIC DNA]</scope>
    <source>
        <strain>HS</strain>
    </source>
</reference>
<name>NRDR_ECOHS</name>
<accession>A7ZX65</accession>
<gene>
    <name evidence="1" type="primary">nrdR</name>
    <name type="ordered locus">EcHS_A0484</name>
</gene>
<sequence length="149" mass="17229">MHCPFCFAVDTKVIDSRLVGEGSSVRRRRQCLVCNERFTTFEVAELVMPRVVKSNDVREPFNEEKLRSGMLRALEKRPVSSDDVEMAINHIKSQLRATGEREVPSKMIGNLVMEQLKKLDKVAYIRFASVYRSFEDIKEFGEEIARLED</sequence>
<feature type="chain" id="PRO_1000080746" description="Transcriptional repressor NrdR">
    <location>
        <begin position="1"/>
        <end position="149"/>
    </location>
</feature>
<feature type="domain" description="ATP-cone" evidence="1">
    <location>
        <begin position="49"/>
        <end position="139"/>
    </location>
</feature>
<feature type="zinc finger region" evidence="1">
    <location>
        <begin position="3"/>
        <end position="34"/>
    </location>
</feature>